<proteinExistence type="evidence at transcript level"/>
<name>LC7L3_PONAB</name>
<reference key="1">
    <citation type="submission" date="2004-11" db="EMBL/GenBank/DDBJ databases">
        <authorList>
            <consortium name="The German cDNA consortium"/>
        </authorList>
    </citation>
    <scope>NUCLEOTIDE SEQUENCE [LARGE SCALE MRNA]</scope>
    <source>
        <tissue>Kidney</tissue>
    </source>
</reference>
<keyword id="KW-0007">Acetylation</keyword>
<keyword id="KW-0175">Coiled coil</keyword>
<keyword id="KW-0238">DNA-binding</keyword>
<keyword id="KW-1017">Isopeptide bond</keyword>
<keyword id="KW-0507">mRNA processing</keyword>
<keyword id="KW-0508">mRNA splicing</keyword>
<keyword id="KW-0539">Nucleus</keyword>
<keyword id="KW-0597">Phosphoprotein</keyword>
<keyword id="KW-1185">Reference proteome</keyword>
<keyword id="KW-0832">Ubl conjugation</keyword>
<organism>
    <name type="scientific">Pongo abelii</name>
    <name type="common">Sumatran orangutan</name>
    <name type="synonym">Pongo pygmaeus abelii</name>
    <dbReference type="NCBI Taxonomy" id="9601"/>
    <lineage>
        <taxon>Eukaryota</taxon>
        <taxon>Metazoa</taxon>
        <taxon>Chordata</taxon>
        <taxon>Craniata</taxon>
        <taxon>Vertebrata</taxon>
        <taxon>Euteleostomi</taxon>
        <taxon>Mammalia</taxon>
        <taxon>Eutheria</taxon>
        <taxon>Euarchontoglires</taxon>
        <taxon>Primates</taxon>
        <taxon>Haplorrhini</taxon>
        <taxon>Catarrhini</taxon>
        <taxon>Hominidae</taxon>
        <taxon>Pongo</taxon>
    </lineage>
</organism>
<evidence type="ECO:0000250" key="1"/>
<evidence type="ECO:0000250" key="2">
    <source>
        <dbReference type="UniProtKB" id="O95232"/>
    </source>
</evidence>
<evidence type="ECO:0000255" key="3"/>
<evidence type="ECO:0000256" key="4">
    <source>
        <dbReference type="SAM" id="MobiDB-lite"/>
    </source>
</evidence>
<evidence type="ECO:0000305" key="5"/>
<comment type="function">
    <text evidence="1">Binds cAMP regulatory element DNA sequence. May play a role in RNA splicing (By similarity).</text>
</comment>
<comment type="subunit">
    <text evidence="2">May interact with SFRS1 and form homodimers. Interacts with JMJD6. Interacts with RBM25. Interacts with RSRC1 (via Arg/Ser-rich domain). Interacts with RRP1B.</text>
</comment>
<comment type="subcellular location">
    <subcellularLocation>
        <location evidence="1">Nucleus speckle</location>
    </subcellularLocation>
</comment>
<comment type="similarity">
    <text evidence="5">Belongs to the Luc7 family.</text>
</comment>
<sequence length="432" mass="51466">MISAAQLLDELMGRDRNLAPDEKRSNVRWDHESVCKYYLCGFCPAELFTNTRSDLGPCEKIHDENLRKQYEKSSRFMKVGYERDFLRYLQSLLAEVERRIRRGHARLALSQNQQSSGAAGPTGKNEEKIQVLTDKIDVLLQQIEELGSEGKVEEAQGMMKLVEQLKEERELLRSTTSTIESFAAQEKQMEVCEVCGAFLIVGDAQSRVDDHLMGKQHMGYAKIKATVEELKEKLRKRTEEPDRDERLKKEKQEREEREKEREREREERERKRRREEEEREKERARDRERRKRSRSRSRHSSRTSDRRCSRSRDHKRSRSRERRRSRSRDRRRSRSHDRSERKHRSRSRDRRRSKSRDRKSYKHRSKSRDREQDRKSKEKEKRGSDDKKSSVKSGSREKQSEDTNTESKESDTKNEVNGTSEDIKSEGDTQSN</sequence>
<feature type="chain" id="PRO_0000233409" description="Luc7-like protein 3">
    <location>
        <begin position="1"/>
        <end position="432"/>
    </location>
</feature>
<feature type="region of interest" description="Disordered" evidence="4">
    <location>
        <begin position="234"/>
        <end position="432"/>
    </location>
</feature>
<feature type="coiled-coil region" evidence="3">
    <location>
        <begin position="124"/>
        <end position="181"/>
    </location>
</feature>
<feature type="compositionally biased region" description="Basic and acidic residues" evidence="4">
    <location>
        <begin position="234"/>
        <end position="287"/>
    </location>
</feature>
<feature type="compositionally biased region" description="Basic residues" evidence="4">
    <location>
        <begin position="288"/>
        <end position="301"/>
    </location>
</feature>
<feature type="compositionally biased region" description="Basic and acidic residues" evidence="4">
    <location>
        <begin position="302"/>
        <end position="311"/>
    </location>
</feature>
<feature type="compositionally biased region" description="Basic residues" evidence="4">
    <location>
        <begin position="312"/>
        <end position="367"/>
    </location>
</feature>
<feature type="compositionally biased region" description="Basic and acidic residues" evidence="4">
    <location>
        <begin position="368"/>
        <end position="414"/>
    </location>
</feature>
<feature type="compositionally biased region" description="Basic and acidic residues" evidence="4">
    <location>
        <begin position="421"/>
        <end position="432"/>
    </location>
</feature>
<feature type="modified residue" description="N-acetylmethionine" evidence="2">
    <location>
        <position position="1"/>
    </location>
</feature>
<feature type="modified residue" description="Phosphoserine" evidence="2">
    <location>
        <position position="3"/>
    </location>
</feature>
<feature type="modified residue" description="Phosphoserine" evidence="2">
    <location>
        <position position="110"/>
    </location>
</feature>
<feature type="modified residue" description="Phosphoserine" evidence="2">
    <location>
        <position position="115"/>
    </location>
</feature>
<feature type="modified residue" description="N6-acetyllysine" evidence="2">
    <location>
        <position position="231"/>
    </location>
</feature>
<feature type="modified residue" description="Phosphoserine" evidence="2">
    <location>
        <position position="420"/>
    </location>
</feature>
<feature type="modified residue" description="Phosphoserine" evidence="2">
    <location>
        <position position="425"/>
    </location>
</feature>
<feature type="modified residue" description="Phosphoserine" evidence="2">
    <location>
        <position position="431"/>
    </location>
</feature>
<feature type="cross-link" description="Glycyl lysine isopeptide (Lys-Gly) (interchain with G-Cter in SUMO1); alternate" evidence="2">
    <location>
        <position position="424"/>
    </location>
</feature>
<feature type="cross-link" description="Glycyl lysine isopeptide (Lys-Gly) (interchain with G-Cter in SUMO2); alternate" evidence="2">
    <location>
        <position position="424"/>
    </location>
</feature>
<dbReference type="EMBL" id="CR859632">
    <property type="protein sequence ID" value="CAH91794.1"/>
    <property type="molecule type" value="mRNA"/>
</dbReference>
<dbReference type="RefSeq" id="NP_001126042.1">
    <property type="nucleotide sequence ID" value="NM_001132570.2"/>
</dbReference>
<dbReference type="SMR" id="Q5R8W6"/>
<dbReference type="FunCoup" id="Q5R8W6">
    <property type="interactions" value="4029"/>
</dbReference>
<dbReference type="STRING" id="9601.ENSPPYP00000009296"/>
<dbReference type="GeneID" id="100172991"/>
<dbReference type="KEGG" id="pon:100172991"/>
<dbReference type="CTD" id="51747"/>
<dbReference type="eggNOG" id="KOG0796">
    <property type="taxonomic scope" value="Eukaryota"/>
</dbReference>
<dbReference type="InParanoid" id="Q5R8W6"/>
<dbReference type="OrthoDB" id="10266921at2759"/>
<dbReference type="Proteomes" id="UP000001595">
    <property type="component" value="Unplaced"/>
</dbReference>
<dbReference type="GO" id="GO:0016607">
    <property type="term" value="C:nuclear speck"/>
    <property type="evidence" value="ECO:0007669"/>
    <property type="project" value="UniProtKB-SubCell"/>
</dbReference>
<dbReference type="GO" id="GO:0005634">
    <property type="term" value="C:nucleus"/>
    <property type="evidence" value="ECO:0000250"/>
    <property type="project" value="UniProtKB"/>
</dbReference>
<dbReference type="GO" id="GO:0005685">
    <property type="term" value="C:U1 snRNP"/>
    <property type="evidence" value="ECO:0007669"/>
    <property type="project" value="InterPro"/>
</dbReference>
<dbReference type="GO" id="GO:0003677">
    <property type="term" value="F:DNA binding"/>
    <property type="evidence" value="ECO:0007669"/>
    <property type="project" value="UniProtKB-KW"/>
</dbReference>
<dbReference type="GO" id="GO:0003729">
    <property type="term" value="F:mRNA binding"/>
    <property type="evidence" value="ECO:0000250"/>
    <property type="project" value="UniProtKB"/>
</dbReference>
<dbReference type="GO" id="GO:0006376">
    <property type="term" value="P:mRNA splice site recognition"/>
    <property type="evidence" value="ECO:0007669"/>
    <property type="project" value="InterPro"/>
</dbReference>
<dbReference type="GO" id="GO:0008380">
    <property type="term" value="P:RNA splicing"/>
    <property type="evidence" value="ECO:0000250"/>
    <property type="project" value="UniProtKB"/>
</dbReference>
<dbReference type="InterPro" id="IPR004882">
    <property type="entry name" value="Luc7-rel"/>
</dbReference>
<dbReference type="PANTHER" id="PTHR12375">
    <property type="entry name" value="RNA-BINDING PROTEIN LUC7-RELATED"/>
    <property type="match status" value="1"/>
</dbReference>
<dbReference type="Pfam" id="PF03194">
    <property type="entry name" value="LUC7"/>
    <property type="match status" value="1"/>
</dbReference>
<protein>
    <recommendedName>
        <fullName>Luc7-like protein 3</fullName>
    </recommendedName>
    <alternativeName>
        <fullName>Cisplatin resistance-associated-overexpressed protein</fullName>
    </alternativeName>
</protein>
<accession>Q5R8W6</accession>
<gene>
    <name type="primary">LUC7L3</name>
    <name type="synonym">CROP</name>
</gene>